<dbReference type="EC" id="2.6.1.62" evidence="1"/>
<dbReference type="EMBL" id="AE000657">
    <property type="protein sequence ID" value="AAC06506.1"/>
    <property type="molecule type" value="Genomic_DNA"/>
</dbReference>
<dbReference type="PIR" id="B70316">
    <property type="entry name" value="B70316"/>
</dbReference>
<dbReference type="RefSeq" id="NP_213117.1">
    <property type="nucleotide sequence ID" value="NC_000918.1"/>
</dbReference>
<dbReference type="RefSeq" id="WP_010880055.1">
    <property type="nucleotide sequence ID" value="NC_000918.1"/>
</dbReference>
<dbReference type="SMR" id="O66557"/>
<dbReference type="FunCoup" id="O66557">
    <property type="interactions" value="182"/>
</dbReference>
<dbReference type="STRING" id="224324.aq_170"/>
<dbReference type="EnsemblBacteria" id="AAC06506">
    <property type="protein sequence ID" value="AAC06506"/>
    <property type="gene ID" value="aq_170"/>
</dbReference>
<dbReference type="KEGG" id="aae:aq_170"/>
<dbReference type="PATRIC" id="fig|224324.8.peg.146"/>
<dbReference type="eggNOG" id="COG0161">
    <property type="taxonomic scope" value="Bacteria"/>
</dbReference>
<dbReference type="HOGENOM" id="CLU_016922_4_3_0"/>
<dbReference type="InParanoid" id="O66557"/>
<dbReference type="OrthoDB" id="9807885at2"/>
<dbReference type="UniPathway" id="UPA00078">
    <property type="reaction ID" value="UER00160"/>
</dbReference>
<dbReference type="Proteomes" id="UP000000798">
    <property type="component" value="Chromosome"/>
</dbReference>
<dbReference type="GO" id="GO:0005737">
    <property type="term" value="C:cytoplasm"/>
    <property type="evidence" value="ECO:0007669"/>
    <property type="project" value="UniProtKB-SubCell"/>
</dbReference>
<dbReference type="GO" id="GO:0004015">
    <property type="term" value="F:adenosylmethionine-8-amino-7-oxononanoate transaminase activity"/>
    <property type="evidence" value="ECO:0000318"/>
    <property type="project" value="GO_Central"/>
</dbReference>
<dbReference type="GO" id="GO:0030170">
    <property type="term" value="F:pyridoxal phosphate binding"/>
    <property type="evidence" value="ECO:0007669"/>
    <property type="project" value="UniProtKB-UniRule"/>
</dbReference>
<dbReference type="GO" id="GO:0009102">
    <property type="term" value="P:biotin biosynthetic process"/>
    <property type="evidence" value="ECO:0000318"/>
    <property type="project" value="GO_Central"/>
</dbReference>
<dbReference type="CDD" id="cd00610">
    <property type="entry name" value="OAT_like"/>
    <property type="match status" value="1"/>
</dbReference>
<dbReference type="FunFam" id="3.40.640.10:FF:000078">
    <property type="entry name" value="Adenosylmethionine-8-amino-7-oxononanoate aminotransferase"/>
    <property type="match status" value="1"/>
</dbReference>
<dbReference type="Gene3D" id="3.90.1150.10">
    <property type="entry name" value="Aspartate Aminotransferase, domain 1"/>
    <property type="match status" value="1"/>
</dbReference>
<dbReference type="Gene3D" id="3.40.640.10">
    <property type="entry name" value="Type I PLP-dependent aspartate aminotransferase-like (Major domain)"/>
    <property type="match status" value="1"/>
</dbReference>
<dbReference type="HAMAP" id="MF_00834">
    <property type="entry name" value="BioA"/>
    <property type="match status" value="1"/>
</dbReference>
<dbReference type="InterPro" id="IPR005814">
    <property type="entry name" value="Aminotrans_3"/>
</dbReference>
<dbReference type="InterPro" id="IPR049704">
    <property type="entry name" value="Aminotrans_3_PPA_site"/>
</dbReference>
<dbReference type="InterPro" id="IPR005815">
    <property type="entry name" value="BioA"/>
</dbReference>
<dbReference type="InterPro" id="IPR015424">
    <property type="entry name" value="PyrdxlP-dep_Trfase"/>
</dbReference>
<dbReference type="InterPro" id="IPR015421">
    <property type="entry name" value="PyrdxlP-dep_Trfase_major"/>
</dbReference>
<dbReference type="InterPro" id="IPR015422">
    <property type="entry name" value="PyrdxlP-dep_Trfase_small"/>
</dbReference>
<dbReference type="NCBIfam" id="TIGR00508">
    <property type="entry name" value="bioA"/>
    <property type="match status" value="1"/>
</dbReference>
<dbReference type="PANTHER" id="PTHR42684">
    <property type="entry name" value="ADENOSYLMETHIONINE-8-AMINO-7-OXONONANOATE AMINOTRANSFERASE"/>
    <property type="match status" value="1"/>
</dbReference>
<dbReference type="PANTHER" id="PTHR42684:SF17">
    <property type="entry name" value="ADENOSYLMETHIONINE-8-AMINO-7-OXONONANOATE AMINOTRANSFERASE"/>
    <property type="match status" value="1"/>
</dbReference>
<dbReference type="Pfam" id="PF00202">
    <property type="entry name" value="Aminotran_3"/>
    <property type="match status" value="1"/>
</dbReference>
<dbReference type="PIRSF" id="PIRSF000521">
    <property type="entry name" value="Transaminase_4ab_Lys_Orn"/>
    <property type="match status" value="1"/>
</dbReference>
<dbReference type="SUPFAM" id="SSF53383">
    <property type="entry name" value="PLP-dependent transferases"/>
    <property type="match status" value="1"/>
</dbReference>
<dbReference type="PROSITE" id="PS00600">
    <property type="entry name" value="AA_TRANSFER_CLASS_3"/>
    <property type="match status" value="1"/>
</dbReference>
<reference key="1">
    <citation type="journal article" date="1998" name="Nature">
        <title>The complete genome of the hyperthermophilic bacterium Aquifex aeolicus.</title>
        <authorList>
            <person name="Deckert G."/>
            <person name="Warren P.V."/>
            <person name="Gaasterland T."/>
            <person name="Young W.G."/>
            <person name="Lenox A.L."/>
            <person name="Graham D.E."/>
            <person name="Overbeek R."/>
            <person name="Snead M.A."/>
            <person name="Keller M."/>
            <person name="Aujay M."/>
            <person name="Huber R."/>
            <person name="Feldman R.A."/>
            <person name="Short J.M."/>
            <person name="Olsen G.J."/>
            <person name="Swanson R.V."/>
        </authorList>
    </citation>
    <scope>NUCLEOTIDE SEQUENCE [LARGE SCALE GENOMIC DNA]</scope>
    <source>
        <strain>VF5</strain>
    </source>
</reference>
<gene>
    <name evidence="1" type="primary">bioA</name>
    <name type="ordered locus">aq_170</name>
</gene>
<keyword id="KW-0032">Aminotransferase</keyword>
<keyword id="KW-0093">Biotin biosynthesis</keyword>
<keyword id="KW-0963">Cytoplasm</keyword>
<keyword id="KW-0663">Pyridoxal phosphate</keyword>
<keyword id="KW-1185">Reference proteome</keyword>
<keyword id="KW-0949">S-adenosyl-L-methionine</keyword>
<keyword id="KW-0808">Transferase</keyword>
<name>BIOA_AQUAE</name>
<feature type="chain" id="PRO_0000120359" description="Adenosylmethionine-8-amino-7-oxononanoate aminotransferase">
    <location>
        <begin position="1"/>
        <end position="453"/>
    </location>
</feature>
<feature type="binding site" evidence="1">
    <location>
        <begin position="118"/>
        <end position="119"/>
    </location>
    <ligand>
        <name>pyridoxal 5'-phosphate</name>
        <dbReference type="ChEBI" id="CHEBI:597326"/>
    </ligand>
</feature>
<feature type="binding site" evidence="1">
    <location>
        <position position="151"/>
    </location>
    <ligand>
        <name>substrate</name>
    </ligand>
</feature>
<feature type="binding site" evidence="1">
    <location>
        <position position="257"/>
    </location>
    <ligand>
        <name>pyridoxal 5'-phosphate</name>
        <dbReference type="ChEBI" id="CHEBI:597326"/>
    </ligand>
</feature>
<feature type="binding site" evidence="1">
    <location>
        <position position="286"/>
    </location>
    <ligand>
        <name>substrate</name>
    </ligand>
</feature>
<feature type="binding site" evidence="1">
    <location>
        <position position="321"/>
    </location>
    <ligand>
        <name>substrate</name>
    </ligand>
</feature>
<feature type="binding site" evidence="1">
    <location>
        <position position="416"/>
    </location>
    <ligand>
        <name>substrate</name>
    </ligand>
</feature>
<feature type="site" description="Participates in the substrate recognition with KAPA and in a stacking interaction with the adenine ring of SAM" evidence="1">
    <location>
        <position position="21"/>
    </location>
</feature>
<feature type="modified residue" description="N6-(pyridoxal phosphate)lysine" evidence="1">
    <location>
        <position position="286"/>
    </location>
</feature>
<comment type="function">
    <text evidence="1">Catalyzes the transfer of the alpha-amino group from S-adenosyl-L-methionine (SAM) to 7-keto-8-aminopelargonic acid (KAPA) to form 7,8-diaminopelargonic acid (DAPA). It is the only aminotransferase known to utilize SAM as an amino donor.</text>
</comment>
<comment type="catalytic activity">
    <reaction evidence="1">
        <text>(8S)-8-amino-7-oxononanoate + S-adenosyl-L-methionine = S-adenosyl-4-methylsulfanyl-2-oxobutanoate + (7R,8S)-7,8-diammoniononanoate</text>
        <dbReference type="Rhea" id="RHEA:16861"/>
        <dbReference type="ChEBI" id="CHEBI:16490"/>
        <dbReference type="ChEBI" id="CHEBI:59789"/>
        <dbReference type="ChEBI" id="CHEBI:149468"/>
        <dbReference type="ChEBI" id="CHEBI:149469"/>
        <dbReference type="EC" id="2.6.1.62"/>
    </reaction>
</comment>
<comment type="cofactor">
    <cofactor evidence="1">
        <name>pyridoxal 5'-phosphate</name>
        <dbReference type="ChEBI" id="CHEBI:597326"/>
    </cofactor>
</comment>
<comment type="pathway">
    <text evidence="1">Cofactor biosynthesis; biotin biosynthesis; 7,8-diaminononanoate from 8-amino-7-oxononanoate (SAM route): step 1/1.</text>
</comment>
<comment type="subunit">
    <text evidence="1">Homodimer.</text>
</comment>
<comment type="subcellular location">
    <subcellularLocation>
        <location evidence="1">Cytoplasm</location>
    </subcellularLocation>
</comment>
<comment type="similarity">
    <text evidence="1">Belongs to the class-III pyridoxal-phosphate-dependent aminotransferase family. BioA subfamily.</text>
</comment>
<organism>
    <name type="scientific">Aquifex aeolicus (strain VF5)</name>
    <dbReference type="NCBI Taxonomy" id="224324"/>
    <lineage>
        <taxon>Bacteria</taxon>
        <taxon>Pseudomonadati</taxon>
        <taxon>Aquificota</taxon>
        <taxon>Aquificia</taxon>
        <taxon>Aquificales</taxon>
        <taxon>Aquificaceae</taxon>
        <taxon>Aquifex</taxon>
    </lineage>
</organism>
<proteinExistence type="inferred from homology"/>
<protein>
    <recommendedName>
        <fullName evidence="1">Adenosylmethionine-8-amino-7-oxononanoate aminotransferase</fullName>
        <ecNumber evidence="1">2.6.1.62</ecNumber>
    </recommendedName>
    <alternativeName>
        <fullName evidence="1">7,8-diamino-pelargonic acid aminotransferase</fullName>
        <shortName evidence="1">DAPA AT</shortName>
        <shortName evidence="1">DAPA aminotransferase</shortName>
    </alternativeName>
    <alternativeName>
        <fullName evidence="1">7,8-diaminononanoate synthase</fullName>
        <shortName evidence="1">DANS</shortName>
    </alternativeName>
    <alternativeName>
        <fullName evidence="1">Diaminopelargonic acid synthase</fullName>
    </alternativeName>
</protein>
<sequence length="453" mass="51459">MWELDPKTLEKWDKEYFWHPFTQMKVYREEENLIFERGEGVYLWDIYGRKYIDAISSLWCNVHGHNHPKLNNAVMKQLCKVAHTTTLGSSNVPAILLAKKLVEISPEGLNKVFYSEDGAEAVEIAIKMAYHYWKNKGVKGKNVFITLSEAYHGDTVGAVSVGGIELFHGTYKDLLFKTIKLPSPYLYCKEKYGELCPECTADLLKQLEDILKSREDIVAVIMEAGIQAAAGMLPFPPGFLKGVRELTKKYDTLMIVDEVATGFGRTGTMFYCEQEGVSPDFMCLGKGITGGYLPLAATLTTDEVFNAFLGEFGEAKHFYHGHTYTGNNLACSVALANLEVFEEERTLEKLQPKIKLLKERLQEFWELKHVGDVRQLGFMAGIELVKDKEKGEPFPYGERTGFKVAYKCREKGVFLRPLGDVMVLMMPLVIEEDEMNYVIDTLKWAIKELEKEV</sequence>
<evidence type="ECO:0000255" key="1">
    <source>
        <dbReference type="HAMAP-Rule" id="MF_00834"/>
    </source>
</evidence>
<accession>O66557</accession>